<feature type="chain" id="PRO_0000384303" description="Mitochondrial distribution and morphology protein 12">
    <location>
        <begin position="1"/>
        <end position="362"/>
    </location>
</feature>
<feature type="domain" description="SMP-LTD" evidence="1">
    <location>
        <begin position="1"/>
        <end position="361"/>
    </location>
</feature>
<feature type="region of interest" description="Disordered" evidence="2">
    <location>
        <begin position="65"/>
        <end position="141"/>
    </location>
</feature>
<feature type="region of interest" description="Disordered" evidence="2">
    <location>
        <begin position="170"/>
        <end position="207"/>
    </location>
</feature>
<feature type="compositionally biased region" description="Polar residues" evidence="2">
    <location>
        <begin position="106"/>
        <end position="119"/>
    </location>
</feature>
<feature type="compositionally biased region" description="Polar residues" evidence="2">
    <location>
        <begin position="170"/>
        <end position="187"/>
    </location>
</feature>
<feature type="compositionally biased region" description="Low complexity" evidence="2">
    <location>
        <begin position="192"/>
        <end position="201"/>
    </location>
</feature>
<sequence length="362" mass="40061">MSFDINWSQLVEDESINNSIKEFLASQFSSVSLPSYIDNLTVSDFSLGDKAPEIIIRDIGDTFEDFYEDEDGPRNAGAPTTTATSGMGESDSSDDEDTRDGLTGEVTLSETTESKTQFAPQPLHPIPTKLRRSHTTSAATPLSSHAHLNSLYAYNLTNVGLGTLNLNSATPSGRDTPTQILNQMRTGPNSPPISNTPISSSKKSKRGENDVQIIAEVKYKGNLHIEVTVDLFLNYPSQHFVTLPIKLHITGFEIHSLICIAYLQNAVYFSFLCDVSDDSQADYFNGAHMESGGNFVEYVSGTNNKERIDIIKKVKIESEIGEVETNVLRNVGKVEKFLVEKIRSIIREETAWPSWLCFDMSD</sequence>
<dbReference type="EMBL" id="CH408155">
    <property type="protein sequence ID" value="EDK36271.2"/>
    <property type="status" value="ALT_INIT"/>
    <property type="molecule type" value="Genomic_DNA"/>
</dbReference>
<dbReference type="RefSeq" id="XP_001486992.1">
    <property type="nucleotide sequence ID" value="XM_001486942.1"/>
</dbReference>
<dbReference type="SMR" id="A5DAR4"/>
<dbReference type="FunCoup" id="A5DAR4">
    <property type="interactions" value="59"/>
</dbReference>
<dbReference type="STRING" id="294746.A5DAR4"/>
<dbReference type="GeneID" id="5129235"/>
<dbReference type="KEGG" id="pgu:PGUG_00369"/>
<dbReference type="eggNOG" id="ENOG502QQS2">
    <property type="taxonomic scope" value="Eukaryota"/>
</dbReference>
<dbReference type="HOGENOM" id="CLU_026794_2_0_1"/>
<dbReference type="InParanoid" id="A5DAR4"/>
<dbReference type="OrthoDB" id="3356905at2759"/>
<dbReference type="Proteomes" id="UP000001997">
    <property type="component" value="Unassembled WGS sequence"/>
</dbReference>
<dbReference type="GO" id="GO:0005789">
    <property type="term" value="C:endoplasmic reticulum membrane"/>
    <property type="evidence" value="ECO:0007669"/>
    <property type="project" value="UniProtKB-SubCell"/>
</dbReference>
<dbReference type="GO" id="GO:0032865">
    <property type="term" value="C:ERMES complex"/>
    <property type="evidence" value="ECO:0007669"/>
    <property type="project" value="UniProtKB-UniRule"/>
</dbReference>
<dbReference type="GO" id="GO:0008289">
    <property type="term" value="F:lipid binding"/>
    <property type="evidence" value="ECO:0007669"/>
    <property type="project" value="UniProtKB-KW"/>
</dbReference>
<dbReference type="GO" id="GO:0000002">
    <property type="term" value="P:mitochondrial genome maintenance"/>
    <property type="evidence" value="ECO:0007669"/>
    <property type="project" value="UniProtKB-UniRule"/>
</dbReference>
<dbReference type="GO" id="GO:1990456">
    <property type="term" value="P:mitochondrion-endoplasmic reticulum membrane tethering"/>
    <property type="evidence" value="ECO:0007669"/>
    <property type="project" value="TreeGrafter"/>
</dbReference>
<dbReference type="GO" id="GO:0015914">
    <property type="term" value="P:phospholipid transport"/>
    <property type="evidence" value="ECO:0007669"/>
    <property type="project" value="TreeGrafter"/>
</dbReference>
<dbReference type="GO" id="GO:0045040">
    <property type="term" value="P:protein insertion into mitochondrial outer membrane"/>
    <property type="evidence" value="ECO:0007669"/>
    <property type="project" value="UniProtKB-UniRule"/>
</dbReference>
<dbReference type="CDD" id="cd21672">
    <property type="entry name" value="SMP_Mdm12"/>
    <property type="match status" value="1"/>
</dbReference>
<dbReference type="HAMAP" id="MF_03104">
    <property type="entry name" value="Mdm12"/>
    <property type="match status" value="1"/>
</dbReference>
<dbReference type="InterPro" id="IPR027532">
    <property type="entry name" value="Mdm12"/>
</dbReference>
<dbReference type="InterPro" id="IPR019411">
    <property type="entry name" value="MMM1_dom"/>
</dbReference>
<dbReference type="InterPro" id="IPR031468">
    <property type="entry name" value="SMP_LBD"/>
</dbReference>
<dbReference type="PANTHER" id="PTHR28204">
    <property type="entry name" value="MITOCHONDRIAL DISTRIBUTION AND MORPHOLOGY PROTEIN 12"/>
    <property type="match status" value="1"/>
</dbReference>
<dbReference type="PANTHER" id="PTHR28204:SF1">
    <property type="entry name" value="MITOCHONDRIAL DISTRIBUTION AND MORPHOLOGY PROTEIN 12"/>
    <property type="match status" value="1"/>
</dbReference>
<dbReference type="Pfam" id="PF10296">
    <property type="entry name" value="MMM1"/>
    <property type="match status" value="1"/>
</dbReference>
<dbReference type="PROSITE" id="PS51847">
    <property type="entry name" value="SMP"/>
    <property type="match status" value="1"/>
</dbReference>
<keyword id="KW-0256">Endoplasmic reticulum</keyword>
<keyword id="KW-0445">Lipid transport</keyword>
<keyword id="KW-0446">Lipid-binding</keyword>
<keyword id="KW-0472">Membrane</keyword>
<keyword id="KW-0496">Mitochondrion</keyword>
<keyword id="KW-1000">Mitochondrion outer membrane</keyword>
<keyword id="KW-1185">Reference proteome</keyword>
<keyword id="KW-0813">Transport</keyword>
<protein>
    <recommendedName>
        <fullName evidence="1">Mitochondrial distribution and morphology protein 12</fullName>
    </recommendedName>
    <alternativeName>
        <fullName evidence="1">Mitochondrial inheritance component MDM12</fullName>
    </alternativeName>
</protein>
<accession>A5DAR4</accession>
<gene>
    <name evidence="1" type="primary">MDM12</name>
    <name type="ORF">PGUG_00369</name>
</gene>
<name>MDM12_PICGU</name>
<organism>
    <name type="scientific">Meyerozyma guilliermondii (strain ATCC 6260 / CBS 566 / DSM 6381 / JCM 1539 / NBRC 10279 / NRRL Y-324)</name>
    <name type="common">Yeast</name>
    <name type="synonym">Candida guilliermondii</name>
    <dbReference type="NCBI Taxonomy" id="294746"/>
    <lineage>
        <taxon>Eukaryota</taxon>
        <taxon>Fungi</taxon>
        <taxon>Dikarya</taxon>
        <taxon>Ascomycota</taxon>
        <taxon>Saccharomycotina</taxon>
        <taxon>Pichiomycetes</taxon>
        <taxon>Debaryomycetaceae</taxon>
        <taxon>Meyerozyma</taxon>
    </lineage>
</organism>
<comment type="function">
    <text evidence="1">Component of the ERMES/MDM complex, which serves as a molecular tether to connect the endoplasmic reticulum (ER) and mitochondria. Components of this complex are involved in the control of mitochondrial shape and protein biogenesis, and function in nonvesicular lipid trafficking between the ER and mitochondria. MDM12 is required for the interaction of the ER-resident membrane protein MMM1 and the outer mitochondrial membrane-resident beta-barrel protein MDM10. The MDM12-MMM1 subcomplex functions in the major beta-barrel assembly pathway that is responsible for biogenesis of all mitochondrial outer membrane beta-barrel proteins, and acts in a late step after the SAM complex. The MDM10-MDM12-MMM1 subcomplex further acts in the TOM40-specific pathway after the action of the MDM12-MMM1 complex. Essential for establishing and maintaining the structure of mitochondria and maintenance of mtDNA nucleoids.</text>
</comment>
<comment type="subunit">
    <text evidence="1">Component of the ER-mitochondria encounter structure (ERMES) or MDM complex, composed of MMM1, MDM10, MDM12 and MDM34. A MMM1 homodimer associates with one molecule of MDM12 on each side in a pairwise head-to-tail manner, and the SMP-LTD domains of MMM1 and MDM12 generate a continuous hydrophobic tunnel for phospholipid trafficking.</text>
</comment>
<comment type="subcellular location">
    <subcellularLocation>
        <location evidence="1">Mitochondrion outer membrane</location>
        <topology evidence="1">Peripheral membrane protein</topology>
        <orientation evidence="1">Cytoplasmic side</orientation>
    </subcellularLocation>
    <subcellularLocation>
        <location evidence="1">Endoplasmic reticulum membrane</location>
        <topology evidence="1">Peripheral membrane protein</topology>
        <orientation evidence="1">Cytoplasmic side</orientation>
    </subcellularLocation>
    <text evidence="1">The ERMES/MDM complex localizes to a few discrete foci (around 10 per single cell), that represent mitochondria-endoplasmic reticulum junctions. These foci are often found next to mtDNA nucleoids.</text>
</comment>
<comment type="domain">
    <text evidence="1">The SMP-LTD domain is a barrel-like domain that can bind various types of glycerophospholipids in its interior and mediate their transfer between two adjacent bilayers.</text>
</comment>
<comment type="similarity">
    <text evidence="1">Belongs to the MDM12 family.</text>
</comment>
<comment type="sequence caution" evidence="3">
    <conflict type="erroneous initiation">
        <sequence resource="EMBL-CDS" id="EDK36271"/>
    </conflict>
</comment>
<reference key="1">
    <citation type="journal article" date="2009" name="Nature">
        <title>Evolution of pathogenicity and sexual reproduction in eight Candida genomes.</title>
        <authorList>
            <person name="Butler G."/>
            <person name="Rasmussen M.D."/>
            <person name="Lin M.F."/>
            <person name="Santos M.A.S."/>
            <person name="Sakthikumar S."/>
            <person name="Munro C.A."/>
            <person name="Rheinbay E."/>
            <person name="Grabherr M."/>
            <person name="Forche A."/>
            <person name="Reedy J.L."/>
            <person name="Agrafioti I."/>
            <person name="Arnaud M.B."/>
            <person name="Bates S."/>
            <person name="Brown A.J.P."/>
            <person name="Brunke S."/>
            <person name="Costanzo M.C."/>
            <person name="Fitzpatrick D.A."/>
            <person name="de Groot P.W.J."/>
            <person name="Harris D."/>
            <person name="Hoyer L.L."/>
            <person name="Hube B."/>
            <person name="Klis F.M."/>
            <person name="Kodira C."/>
            <person name="Lennard N."/>
            <person name="Logue M.E."/>
            <person name="Martin R."/>
            <person name="Neiman A.M."/>
            <person name="Nikolaou E."/>
            <person name="Quail M.A."/>
            <person name="Quinn J."/>
            <person name="Santos M.C."/>
            <person name="Schmitzberger F.F."/>
            <person name="Sherlock G."/>
            <person name="Shah P."/>
            <person name="Silverstein K.A.T."/>
            <person name="Skrzypek M.S."/>
            <person name="Soll D."/>
            <person name="Staggs R."/>
            <person name="Stansfield I."/>
            <person name="Stumpf M.P.H."/>
            <person name="Sudbery P.E."/>
            <person name="Srikantha T."/>
            <person name="Zeng Q."/>
            <person name="Berman J."/>
            <person name="Berriman M."/>
            <person name="Heitman J."/>
            <person name="Gow N.A.R."/>
            <person name="Lorenz M.C."/>
            <person name="Birren B.W."/>
            <person name="Kellis M."/>
            <person name="Cuomo C.A."/>
        </authorList>
    </citation>
    <scope>NUCLEOTIDE SEQUENCE [LARGE SCALE GENOMIC DNA]</scope>
    <source>
        <strain>ATCC 6260 / CBS 566 / DSM 6381 / JCM 1539 / NBRC 10279 / NRRL Y-324</strain>
    </source>
</reference>
<proteinExistence type="inferred from homology"/>
<evidence type="ECO:0000255" key="1">
    <source>
        <dbReference type="HAMAP-Rule" id="MF_03104"/>
    </source>
</evidence>
<evidence type="ECO:0000256" key="2">
    <source>
        <dbReference type="SAM" id="MobiDB-lite"/>
    </source>
</evidence>
<evidence type="ECO:0000305" key="3"/>